<protein>
    <recommendedName>
        <fullName evidence="1">Putative transport protein YidE</fullName>
    </recommendedName>
</protein>
<gene>
    <name evidence="1" type="primary">yidE</name>
    <name type="ordered locus">E2348C_3995</name>
</gene>
<feature type="chain" id="PRO_1000148999" description="Putative transport protein YidE">
    <location>
        <begin position="1"/>
        <end position="553"/>
    </location>
</feature>
<feature type="transmembrane region" description="Helical" evidence="1">
    <location>
        <begin position="4"/>
        <end position="24"/>
    </location>
</feature>
<feature type="transmembrane region" description="Helical" evidence="1">
    <location>
        <begin position="28"/>
        <end position="48"/>
    </location>
</feature>
<feature type="transmembrane region" description="Helical" evidence="1">
    <location>
        <begin position="65"/>
        <end position="85"/>
    </location>
</feature>
<feature type="transmembrane region" description="Helical" evidence="1">
    <location>
        <begin position="95"/>
        <end position="115"/>
    </location>
</feature>
<feature type="transmembrane region" description="Helical" evidence="1">
    <location>
        <begin position="158"/>
        <end position="178"/>
    </location>
</feature>
<feature type="transmembrane region" description="Helical" evidence="1">
    <location>
        <begin position="371"/>
        <end position="391"/>
    </location>
</feature>
<feature type="transmembrane region" description="Helical" evidence="1">
    <location>
        <begin position="393"/>
        <end position="413"/>
    </location>
</feature>
<feature type="transmembrane region" description="Helical" evidence="1">
    <location>
        <begin position="439"/>
        <end position="459"/>
    </location>
</feature>
<feature type="transmembrane region" description="Helical" evidence="1">
    <location>
        <begin position="464"/>
        <end position="484"/>
    </location>
</feature>
<feature type="transmembrane region" description="Helical" evidence="1">
    <location>
        <begin position="493"/>
        <end position="513"/>
    </location>
</feature>
<feature type="transmembrane region" description="Helical" evidence="1">
    <location>
        <begin position="533"/>
        <end position="553"/>
    </location>
</feature>
<feature type="domain" description="RCK C-terminal 1" evidence="1">
    <location>
        <begin position="191"/>
        <end position="276"/>
    </location>
</feature>
<feature type="domain" description="RCK C-terminal 2" evidence="1">
    <location>
        <begin position="279"/>
        <end position="361"/>
    </location>
</feature>
<accession>B7UMF2</accession>
<sequence length="553" mass="58990">MSDIALTVSILALVAVVGLFIGNVKFRGVGLGIGGVLFGGIIVGHFVSQAGMTLSSDMLHVIQEFGLILFVYTIGIQVGPGFFASLRVSGLRLNLFAVLIVIIGGLVTAILHKLFDIPLPVVLGIFSGAVTNTPALGAGQQILRDLGTPMAMVDQMGMSYAMAYPFGICGILFTMWMLRVIFRVNVETEAQQHESTRTNGGALIRTINIRVENPNLHNLAIKDVPILNGDKVICSRLKREETLKVPSPETVIQLGDLLHLVGQPADLHNAQLVIGQEVDTSLSTKGTDLRVERVVVTNENVLGKRIRDLHFKERYDVVISRLNRAGVELVASSDISLQFGDILNLVGRPSAIDAVANVLGNVQQKLQQVQMLPVFIGIGLGVLLGSIPVFVPGFPAALKLGLAGGPLIMALILGRIGSIGKLYWFMPPSANLALRELGIVLFLSVVGLKSGGDFIHTLVDGEGLSWIGYGALITAVPLITVGILARMLAKMNYLTMCGMLAGSMTDPPALAFANNLHPTSGAAALSYATVYPLVMFLRIITPQLLAVLFWSIG</sequence>
<evidence type="ECO:0000255" key="1">
    <source>
        <dbReference type="HAMAP-Rule" id="MF_01016"/>
    </source>
</evidence>
<organism>
    <name type="scientific">Escherichia coli O127:H6 (strain E2348/69 / EPEC)</name>
    <dbReference type="NCBI Taxonomy" id="574521"/>
    <lineage>
        <taxon>Bacteria</taxon>
        <taxon>Pseudomonadati</taxon>
        <taxon>Pseudomonadota</taxon>
        <taxon>Gammaproteobacteria</taxon>
        <taxon>Enterobacterales</taxon>
        <taxon>Enterobacteriaceae</taxon>
        <taxon>Escherichia</taxon>
    </lineage>
</organism>
<dbReference type="EMBL" id="FM180568">
    <property type="protein sequence ID" value="CAS11543.1"/>
    <property type="molecule type" value="Genomic_DNA"/>
</dbReference>
<dbReference type="RefSeq" id="WP_001279775.1">
    <property type="nucleotide sequence ID" value="NC_011601.1"/>
</dbReference>
<dbReference type="SMR" id="B7UMF2"/>
<dbReference type="KEGG" id="ecg:E2348C_3995"/>
<dbReference type="HOGENOM" id="CLU_035023_3_1_6"/>
<dbReference type="Proteomes" id="UP000008205">
    <property type="component" value="Chromosome"/>
</dbReference>
<dbReference type="GO" id="GO:0005886">
    <property type="term" value="C:plasma membrane"/>
    <property type="evidence" value="ECO:0007669"/>
    <property type="project" value="UniProtKB-SubCell"/>
</dbReference>
<dbReference type="GO" id="GO:0008324">
    <property type="term" value="F:monoatomic cation transmembrane transporter activity"/>
    <property type="evidence" value="ECO:0007669"/>
    <property type="project" value="InterPro"/>
</dbReference>
<dbReference type="GO" id="GO:0006813">
    <property type="term" value="P:potassium ion transport"/>
    <property type="evidence" value="ECO:0007669"/>
    <property type="project" value="InterPro"/>
</dbReference>
<dbReference type="FunFam" id="3.30.70.1450:FF:000004">
    <property type="entry name" value="Putative transport protein YidE"/>
    <property type="match status" value="1"/>
</dbReference>
<dbReference type="Gene3D" id="3.30.70.1450">
    <property type="entry name" value="Regulator of K+ conductance, C-terminal domain"/>
    <property type="match status" value="2"/>
</dbReference>
<dbReference type="HAMAP" id="MF_01016">
    <property type="entry name" value="YidE"/>
    <property type="match status" value="1"/>
</dbReference>
<dbReference type="InterPro" id="IPR050144">
    <property type="entry name" value="AAE_transporter"/>
</dbReference>
<dbReference type="InterPro" id="IPR006037">
    <property type="entry name" value="RCK_C"/>
</dbReference>
<dbReference type="InterPro" id="IPR036721">
    <property type="entry name" value="RCK_C_sf"/>
</dbReference>
<dbReference type="InterPro" id="IPR023018">
    <property type="entry name" value="Transpt_YidE_put"/>
</dbReference>
<dbReference type="InterPro" id="IPR006512">
    <property type="entry name" value="YidE_YbjL"/>
</dbReference>
<dbReference type="NCBIfam" id="NF003007">
    <property type="entry name" value="PRK03818.1"/>
    <property type="match status" value="1"/>
</dbReference>
<dbReference type="NCBIfam" id="TIGR01625">
    <property type="entry name" value="YidE_YbjL_dupl"/>
    <property type="match status" value="2"/>
</dbReference>
<dbReference type="PANTHER" id="PTHR30445">
    <property type="entry name" value="K(+)_H(+) ANTIPORTER SUBUNIT KHTT"/>
    <property type="match status" value="1"/>
</dbReference>
<dbReference type="PANTHER" id="PTHR30445:SF3">
    <property type="entry name" value="TRANSPORT PROTEIN YIDE-RELATED"/>
    <property type="match status" value="1"/>
</dbReference>
<dbReference type="Pfam" id="PF06826">
    <property type="entry name" value="Asp-Al_Ex"/>
    <property type="match status" value="2"/>
</dbReference>
<dbReference type="Pfam" id="PF02080">
    <property type="entry name" value="TrkA_C"/>
    <property type="match status" value="2"/>
</dbReference>
<dbReference type="SUPFAM" id="SSF116726">
    <property type="entry name" value="TrkA C-terminal domain-like"/>
    <property type="match status" value="2"/>
</dbReference>
<dbReference type="PROSITE" id="PS51202">
    <property type="entry name" value="RCK_C"/>
    <property type="match status" value="2"/>
</dbReference>
<comment type="subcellular location">
    <subcellularLocation>
        <location evidence="1">Cell membrane</location>
        <topology evidence="1">Multi-pass membrane protein</topology>
    </subcellularLocation>
</comment>
<comment type="similarity">
    <text evidence="1">Belongs to the AAE transporter (TC 2.A.81) family. YidE subfamily.</text>
</comment>
<reference key="1">
    <citation type="journal article" date="2009" name="J. Bacteriol.">
        <title>Complete genome sequence and comparative genome analysis of enteropathogenic Escherichia coli O127:H6 strain E2348/69.</title>
        <authorList>
            <person name="Iguchi A."/>
            <person name="Thomson N.R."/>
            <person name="Ogura Y."/>
            <person name="Saunders D."/>
            <person name="Ooka T."/>
            <person name="Henderson I.R."/>
            <person name="Harris D."/>
            <person name="Asadulghani M."/>
            <person name="Kurokawa K."/>
            <person name="Dean P."/>
            <person name="Kenny B."/>
            <person name="Quail M.A."/>
            <person name="Thurston S."/>
            <person name="Dougan G."/>
            <person name="Hayashi T."/>
            <person name="Parkhill J."/>
            <person name="Frankel G."/>
        </authorList>
    </citation>
    <scope>NUCLEOTIDE SEQUENCE [LARGE SCALE GENOMIC DNA]</scope>
    <source>
        <strain>E2348/69 / EPEC</strain>
    </source>
</reference>
<proteinExistence type="inferred from homology"/>
<keyword id="KW-1003">Cell membrane</keyword>
<keyword id="KW-0472">Membrane</keyword>
<keyword id="KW-1185">Reference proteome</keyword>
<keyword id="KW-0677">Repeat</keyword>
<keyword id="KW-0812">Transmembrane</keyword>
<keyword id="KW-1133">Transmembrane helix</keyword>
<keyword id="KW-0813">Transport</keyword>
<name>YIDE_ECO27</name>